<accession>O31516</accession>
<sequence>MKKRVAGWYRRMKIKDKLFVFLSLIMAVSFLFVYSGVQYAFHVYDEQIYRKSSEVLRMSSERIEDELKKIEDVSYEIITDEQIQRILSMQNRDDTYDQYQMKQELWDQLAGYASDEKYIDSIHVIDARGSEYSAGSSSSDLLQQEQEEVFKRAKAKSGRNLWMTLGGSDPVLISARQIRSYHQLSLNGLGMVLIQVNVKQMIRDVPKDWGDSVGDIMIADQGGNLVYTAHASAHVPEAAKETLKHPGYDLIKKNGKRYFISYLQSSYQNWSYYNVIPFDQMFAKISFMKTVIGTCFLLFFCVVLLFGRKIANSITEPIEQLVTAMKSVQHSGIEAGVSLSLPEHTQDEAGMLNRHFTVMMKRINELMEENVEKQLIIKETELKALQAQINPHFLYNTLESINWLAKANQQKQISKMVESLGFLLRNSIHMKKDIVTIQEEADIVRHYMTIQRFRFEERLKFTLDIDDEVKHCLIPKLTLQPLAENAIQYALEPFTRPCAIRIQAKKAKGCVCITVEDNGPGMDGRILESTGGRGIGLWNIRERISLTFGEPYGLRIHSEHEKGTRIVITIPCRNEVV</sequence>
<gene>
    <name type="primary">yesM</name>
    <name type="ordered locus">BSU06950</name>
</gene>
<proteinExistence type="inferred from homology"/>
<keyword id="KW-0067">ATP-binding</keyword>
<keyword id="KW-1003">Cell membrane</keyword>
<keyword id="KW-0418">Kinase</keyword>
<keyword id="KW-0472">Membrane</keyword>
<keyword id="KW-0547">Nucleotide-binding</keyword>
<keyword id="KW-0597">Phosphoprotein</keyword>
<keyword id="KW-1185">Reference proteome</keyword>
<keyword id="KW-0808">Transferase</keyword>
<keyword id="KW-0812">Transmembrane</keyword>
<keyword id="KW-1133">Transmembrane helix</keyword>
<keyword id="KW-0902">Two-component regulatory system</keyword>
<organism>
    <name type="scientific">Bacillus subtilis (strain 168)</name>
    <dbReference type="NCBI Taxonomy" id="224308"/>
    <lineage>
        <taxon>Bacteria</taxon>
        <taxon>Bacillati</taxon>
        <taxon>Bacillota</taxon>
        <taxon>Bacilli</taxon>
        <taxon>Bacillales</taxon>
        <taxon>Bacillaceae</taxon>
        <taxon>Bacillus</taxon>
    </lineage>
</organism>
<dbReference type="EC" id="2.7.13.3"/>
<dbReference type="EMBL" id="AL009126">
    <property type="protein sequence ID" value="CAB12514.1"/>
    <property type="molecule type" value="Genomic_DNA"/>
</dbReference>
<dbReference type="PIR" id="D69796">
    <property type="entry name" value="D69796"/>
</dbReference>
<dbReference type="RefSeq" id="NP_388576.1">
    <property type="nucleotide sequence ID" value="NC_000964.3"/>
</dbReference>
<dbReference type="RefSeq" id="WP_003243833.1">
    <property type="nucleotide sequence ID" value="NZ_OZ025638.1"/>
</dbReference>
<dbReference type="SMR" id="O31516"/>
<dbReference type="FunCoup" id="O31516">
    <property type="interactions" value="161"/>
</dbReference>
<dbReference type="IntAct" id="O31516">
    <property type="interactions" value="1"/>
</dbReference>
<dbReference type="STRING" id="224308.BSU06950"/>
<dbReference type="PaxDb" id="224308-BSU06950"/>
<dbReference type="EnsemblBacteria" id="CAB12514">
    <property type="protein sequence ID" value="CAB12514"/>
    <property type="gene ID" value="BSU_06950"/>
</dbReference>
<dbReference type="GeneID" id="936078"/>
<dbReference type="KEGG" id="bsu:BSU06950"/>
<dbReference type="PATRIC" id="fig|224308.179.peg.755"/>
<dbReference type="eggNOG" id="COG2972">
    <property type="taxonomic scope" value="Bacteria"/>
</dbReference>
<dbReference type="InParanoid" id="O31516"/>
<dbReference type="OrthoDB" id="9776552at2"/>
<dbReference type="BioCyc" id="BSUB:BSU06950-MONOMER"/>
<dbReference type="Proteomes" id="UP000001570">
    <property type="component" value="Chromosome"/>
</dbReference>
<dbReference type="GO" id="GO:0005886">
    <property type="term" value="C:plasma membrane"/>
    <property type="evidence" value="ECO:0000318"/>
    <property type="project" value="GO_Central"/>
</dbReference>
<dbReference type="GO" id="GO:0005524">
    <property type="term" value="F:ATP binding"/>
    <property type="evidence" value="ECO:0007669"/>
    <property type="project" value="UniProtKB-KW"/>
</dbReference>
<dbReference type="GO" id="GO:0000155">
    <property type="term" value="F:phosphorelay sensor kinase activity"/>
    <property type="evidence" value="ECO:0000318"/>
    <property type="project" value="GO_Central"/>
</dbReference>
<dbReference type="GO" id="GO:0007165">
    <property type="term" value="P:signal transduction"/>
    <property type="evidence" value="ECO:0000318"/>
    <property type="project" value="GO_Central"/>
</dbReference>
<dbReference type="CDD" id="cd06225">
    <property type="entry name" value="HAMP"/>
    <property type="match status" value="1"/>
</dbReference>
<dbReference type="CDD" id="cd16924">
    <property type="entry name" value="HATPase_YpdA-YehU-LytS-like"/>
    <property type="match status" value="1"/>
</dbReference>
<dbReference type="Gene3D" id="6.10.340.10">
    <property type="match status" value="1"/>
</dbReference>
<dbReference type="Gene3D" id="3.30.565.10">
    <property type="entry name" value="Histidine kinase-like ATPase, C-terminal domain"/>
    <property type="match status" value="1"/>
</dbReference>
<dbReference type="InterPro" id="IPR050640">
    <property type="entry name" value="Bact_2-comp_sensor_kinase"/>
</dbReference>
<dbReference type="InterPro" id="IPR033479">
    <property type="entry name" value="dCache_1"/>
</dbReference>
<dbReference type="InterPro" id="IPR003660">
    <property type="entry name" value="HAMP_dom"/>
</dbReference>
<dbReference type="InterPro" id="IPR036890">
    <property type="entry name" value="HATPase_C_sf"/>
</dbReference>
<dbReference type="InterPro" id="IPR005467">
    <property type="entry name" value="His_kinase_dom"/>
</dbReference>
<dbReference type="InterPro" id="IPR004358">
    <property type="entry name" value="Sig_transdc_His_kin-like_C"/>
</dbReference>
<dbReference type="InterPro" id="IPR010559">
    <property type="entry name" value="Sig_transdc_His_kin_internal"/>
</dbReference>
<dbReference type="PANTHER" id="PTHR34220">
    <property type="entry name" value="SENSOR HISTIDINE KINASE YPDA"/>
    <property type="match status" value="1"/>
</dbReference>
<dbReference type="PANTHER" id="PTHR34220:SF7">
    <property type="entry name" value="SENSOR HISTIDINE KINASE YPDA"/>
    <property type="match status" value="1"/>
</dbReference>
<dbReference type="Pfam" id="PF02743">
    <property type="entry name" value="dCache_1"/>
    <property type="match status" value="1"/>
</dbReference>
<dbReference type="Pfam" id="PF00672">
    <property type="entry name" value="HAMP"/>
    <property type="match status" value="1"/>
</dbReference>
<dbReference type="Pfam" id="PF02518">
    <property type="entry name" value="HATPase_c"/>
    <property type="match status" value="1"/>
</dbReference>
<dbReference type="Pfam" id="PF06580">
    <property type="entry name" value="His_kinase"/>
    <property type="match status" value="1"/>
</dbReference>
<dbReference type="PRINTS" id="PR00344">
    <property type="entry name" value="BCTRLSENSOR"/>
</dbReference>
<dbReference type="SMART" id="SM00304">
    <property type="entry name" value="HAMP"/>
    <property type="match status" value="1"/>
</dbReference>
<dbReference type="SMART" id="SM00387">
    <property type="entry name" value="HATPase_c"/>
    <property type="match status" value="1"/>
</dbReference>
<dbReference type="SUPFAM" id="SSF55874">
    <property type="entry name" value="ATPase domain of HSP90 chaperone/DNA topoisomerase II/histidine kinase"/>
    <property type="match status" value="1"/>
</dbReference>
<dbReference type="PROSITE" id="PS50885">
    <property type="entry name" value="HAMP"/>
    <property type="match status" value="1"/>
</dbReference>
<dbReference type="PROSITE" id="PS50109">
    <property type="entry name" value="HIS_KIN"/>
    <property type="match status" value="1"/>
</dbReference>
<protein>
    <recommendedName>
        <fullName>Sensor histidine kinase YesM</fullName>
        <ecNumber>2.7.13.3</ecNumber>
    </recommendedName>
</protein>
<comment type="function">
    <text evidence="4">Member of the two-component regulatory system YesM/YesN. Probably activates YesN by phosphorylation.</text>
</comment>
<comment type="catalytic activity">
    <reaction>
        <text>ATP + protein L-histidine = ADP + protein N-phospho-L-histidine.</text>
        <dbReference type="EC" id="2.7.13.3"/>
    </reaction>
</comment>
<comment type="subcellular location">
    <subcellularLocation>
        <location evidence="5">Cell membrane</location>
        <topology evidence="5">Multi-pass membrane protein</topology>
    </subcellularLocation>
</comment>
<feature type="chain" id="PRO_0000360782" description="Sensor histidine kinase YesM">
    <location>
        <begin position="1"/>
        <end position="577"/>
    </location>
</feature>
<feature type="topological domain" description="Cytoplasmic" evidence="1">
    <location>
        <begin position="1"/>
        <end position="17"/>
    </location>
</feature>
<feature type="transmembrane region" description="Helical" evidence="1">
    <location>
        <begin position="18"/>
        <end position="38"/>
    </location>
</feature>
<feature type="topological domain" description="Extracellular" evidence="1">
    <location>
        <begin position="39"/>
        <end position="286"/>
    </location>
</feature>
<feature type="transmembrane region" description="Helical" evidence="1">
    <location>
        <begin position="287"/>
        <end position="307"/>
    </location>
</feature>
<feature type="topological domain" description="Cytoplasmic" evidence="1">
    <location>
        <begin position="308"/>
        <end position="577"/>
    </location>
</feature>
<feature type="domain" description="HAMP" evidence="2">
    <location>
        <begin position="312"/>
        <end position="368"/>
    </location>
</feature>
<feature type="domain" description="Histidine kinase" evidence="3">
    <location>
        <begin position="365"/>
        <end position="574"/>
    </location>
</feature>
<feature type="modified residue" description="Phosphohistidine; by autocatalysis" evidence="3">
    <location>
        <position position="392"/>
    </location>
</feature>
<name>YESM_BACSU</name>
<reference key="1">
    <citation type="journal article" date="1997" name="Nature">
        <title>The complete genome sequence of the Gram-positive bacterium Bacillus subtilis.</title>
        <authorList>
            <person name="Kunst F."/>
            <person name="Ogasawara N."/>
            <person name="Moszer I."/>
            <person name="Albertini A.M."/>
            <person name="Alloni G."/>
            <person name="Azevedo V."/>
            <person name="Bertero M.G."/>
            <person name="Bessieres P."/>
            <person name="Bolotin A."/>
            <person name="Borchert S."/>
            <person name="Borriss R."/>
            <person name="Boursier L."/>
            <person name="Brans A."/>
            <person name="Braun M."/>
            <person name="Brignell S.C."/>
            <person name="Bron S."/>
            <person name="Brouillet S."/>
            <person name="Bruschi C.V."/>
            <person name="Caldwell B."/>
            <person name="Capuano V."/>
            <person name="Carter N.M."/>
            <person name="Choi S.-K."/>
            <person name="Codani J.-J."/>
            <person name="Connerton I.F."/>
            <person name="Cummings N.J."/>
            <person name="Daniel R.A."/>
            <person name="Denizot F."/>
            <person name="Devine K.M."/>
            <person name="Duesterhoeft A."/>
            <person name="Ehrlich S.D."/>
            <person name="Emmerson P.T."/>
            <person name="Entian K.-D."/>
            <person name="Errington J."/>
            <person name="Fabret C."/>
            <person name="Ferrari E."/>
            <person name="Foulger D."/>
            <person name="Fritz C."/>
            <person name="Fujita M."/>
            <person name="Fujita Y."/>
            <person name="Fuma S."/>
            <person name="Galizzi A."/>
            <person name="Galleron N."/>
            <person name="Ghim S.-Y."/>
            <person name="Glaser P."/>
            <person name="Goffeau A."/>
            <person name="Golightly E.J."/>
            <person name="Grandi G."/>
            <person name="Guiseppi G."/>
            <person name="Guy B.J."/>
            <person name="Haga K."/>
            <person name="Haiech J."/>
            <person name="Harwood C.R."/>
            <person name="Henaut A."/>
            <person name="Hilbert H."/>
            <person name="Holsappel S."/>
            <person name="Hosono S."/>
            <person name="Hullo M.-F."/>
            <person name="Itaya M."/>
            <person name="Jones L.-M."/>
            <person name="Joris B."/>
            <person name="Karamata D."/>
            <person name="Kasahara Y."/>
            <person name="Klaerr-Blanchard M."/>
            <person name="Klein C."/>
            <person name="Kobayashi Y."/>
            <person name="Koetter P."/>
            <person name="Koningstein G."/>
            <person name="Krogh S."/>
            <person name="Kumano M."/>
            <person name="Kurita K."/>
            <person name="Lapidus A."/>
            <person name="Lardinois S."/>
            <person name="Lauber J."/>
            <person name="Lazarevic V."/>
            <person name="Lee S.-M."/>
            <person name="Levine A."/>
            <person name="Liu H."/>
            <person name="Masuda S."/>
            <person name="Mauel C."/>
            <person name="Medigue C."/>
            <person name="Medina N."/>
            <person name="Mellado R.P."/>
            <person name="Mizuno M."/>
            <person name="Moestl D."/>
            <person name="Nakai S."/>
            <person name="Noback M."/>
            <person name="Noone D."/>
            <person name="O'Reilly M."/>
            <person name="Ogawa K."/>
            <person name="Ogiwara A."/>
            <person name="Oudega B."/>
            <person name="Park S.-H."/>
            <person name="Parro V."/>
            <person name="Pohl T.M."/>
            <person name="Portetelle D."/>
            <person name="Porwollik S."/>
            <person name="Prescott A.M."/>
            <person name="Presecan E."/>
            <person name="Pujic P."/>
            <person name="Purnelle B."/>
            <person name="Rapoport G."/>
            <person name="Rey M."/>
            <person name="Reynolds S."/>
            <person name="Rieger M."/>
            <person name="Rivolta C."/>
            <person name="Rocha E."/>
            <person name="Roche B."/>
            <person name="Rose M."/>
            <person name="Sadaie Y."/>
            <person name="Sato T."/>
            <person name="Scanlan E."/>
            <person name="Schleich S."/>
            <person name="Schroeter R."/>
            <person name="Scoffone F."/>
            <person name="Sekiguchi J."/>
            <person name="Sekowska A."/>
            <person name="Seror S.J."/>
            <person name="Serror P."/>
            <person name="Shin B.-S."/>
            <person name="Soldo B."/>
            <person name="Sorokin A."/>
            <person name="Tacconi E."/>
            <person name="Takagi T."/>
            <person name="Takahashi H."/>
            <person name="Takemaru K."/>
            <person name="Takeuchi M."/>
            <person name="Tamakoshi A."/>
            <person name="Tanaka T."/>
            <person name="Terpstra P."/>
            <person name="Tognoni A."/>
            <person name="Tosato V."/>
            <person name="Uchiyama S."/>
            <person name="Vandenbol M."/>
            <person name="Vannier F."/>
            <person name="Vassarotti A."/>
            <person name="Viari A."/>
            <person name="Wambutt R."/>
            <person name="Wedler E."/>
            <person name="Wedler H."/>
            <person name="Weitzenegger T."/>
            <person name="Winters P."/>
            <person name="Wipat A."/>
            <person name="Yamamoto H."/>
            <person name="Yamane K."/>
            <person name="Yasumoto K."/>
            <person name="Yata K."/>
            <person name="Yoshida K."/>
            <person name="Yoshikawa H.-F."/>
            <person name="Zumstein E."/>
            <person name="Yoshikawa H."/>
            <person name="Danchin A."/>
        </authorList>
    </citation>
    <scope>NUCLEOTIDE SEQUENCE [LARGE SCALE GENOMIC DNA]</scope>
    <source>
        <strain>168</strain>
    </source>
</reference>
<reference key="2">
    <citation type="journal article" date="2001" name="J. Bacteriol.">
        <title>Comprehensive DNA microarray analysis of Bacillus subtilis two-component regulatory systems.</title>
        <authorList>
            <person name="Kobayashi K."/>
            <person name="Ogura M."/>
            <person name="Yamaguchi H."/>
            <person name="Yoshida K."/>
            <person name="Ogasawara N."/>
            <person name="Tanaka T."/>
            <person name="Fujita Y."/>
        </authorList>
    </citation>
    <scope>FUNCTION</scope>
</reference>
<evidence type="ECO:0000255" key="1"/>
<evidence type="ECO:0000255" key="2">
    <source>
        <dbReference type="PROSITE-ProRule" id="PRU00102"/>
    </source>
</evidence>
<evidence type="ECO:0000255" key="3">
    <source>
        <dbReference type="PROSITE-ProRule" id="PRU00107"/>
    </source>
</evidence>
<evidence type="ECO:0000269" key="4">
    <source>
    </source>
</evidence>
<evidence type="ECO:0000305" key="5"/>